<feature type="chain" id="PRO_0000366314" description="UPF0735 ACT domain-containing protein Helmi_18680">
    <location>
        <begin position="1"/>
        <end position="150"/>
    </location>
</feature>
<feature type="domain" description="ACT" evidence="1">
    <location>
        <begin position="72"/>
        <end position="147"/>
    </location>
</feature>
<reference key="1">
    <citation type="journal article" date="2008" name="J. Bacteriol.">
        <title>The genome of Heliobacterium modesticaldum, a phototrophic representative of the Firmicutes containing the simplest photosynthetic apparatus.</title>
        <authorList>
            <person name="Sattley W.M."/>
            <person name="Madigan M.T."/>
            <person name="Swingley W.D."/>
            <person name="Cheung P.C."/>
            <person name="Clocksin K.M."/>
            <person name="Conrad A.L."/>
            <person name="Dejesa L.C."/>
            <person name="Honchak B.M."/>
            <person name="Jung D.O."/>
            <person name="Karbach L.E."/>
            <person name="Kurdoglu A."/>
            <person name="Lahiri S."/>
            <person name="Mastrian S.D."/>
            <person name="Page L.E."/>
            <person name="Taylor H.L."/>
            <person name="Wang Z.T."/>
            <person name="Raymond J."/>
            <person name="Chen M."/>
            <person name="Blankenship R.E."/>
            <person name="Touchman J.W."/>
        </authorList>
    </citation>
    <scope>NUCLEOTIDE SEQUENCE [LARGE SCALE GENOMIC DNA]</scope>
    <source>
        <strain>ATCC 51547 / Ice1</strain>
    </source>
</reference>
<gene>
    <name type="ordered locus">Helmi_18680</name>
    <name type="ORF">HM1_1935</name>
</gene>
<protein>
    <recommendedName>
        <fullName evidence="1">UPF0735 ACT domain-containing protein Helmi_18680</fullName>
    </recommendedName>
</protein>
<comment type="similarity">
    <text evidence="1">Belongs to the UPF0735 family.</text>
</comment>
<evidence type="ECO:0000255" key="1">
    <source>
        <dbReference type="HAMAP-Rule" id="MF_00707"/>
    </source>
</evidence>
<sequence length="150" mass="16374">MNDGGKRFYLVDGDILPEAILKTALVNEMLAKGEVTKVSEAVEKVGLSRSAYYKYKDGVLPFREPGRSNIVSVSLLLEHHPGILSRVLNTVAAMEGNILTINQSVPEKGLAPVAFVLDRSRMSVDLPRLLAELRQLTGVRSAQLVGSEEE</sequence>
<name>Y1868_HELMI</name>
<dbReference type="EMBL" id="CP000930">
    <property type="protein sequence ID" value="ABZ84493.1"/>
    <property type="molecule type" value="Genomic_DNA"/>
</dbReference>
<dbReference type="RefSeq" id="WP_012282994.1">
    <property type="nucleotide sequence ID" value="NC_010337.2"/>
</dbReference>
<dbReference type="STRING" id="498761.HM1_1935"/>
<dbReference type="KEGG" id="hmo:HM1_1935"/>
<dbReference type="eggNOG" id="COG4492">
    <property type="taxonomic scope" value="Bacteria"/>
</dbReference>
<dbReference type="HOGENOM" id="CLU_128147_0_0_9"/>
<dbReference type="OrthoDB" id="9788773at2"/>
<dbReference type="Proteomes" id="UP000008550">
    <property type="component" value="Chromosome"/>
</dbReference>
<dbReference type="Gene3D" id="3.30.70.260">
    <property type="match status" value="1"/>
</dbReference>
<dbReference type="HAMAP" id="MF_00707">
    <property type="entry name" value="UPF0735"/>
    <property type="match status" value="1"/>
</dbReference>
<dbReference type="InterPro" id="IPR045865">
    <property type="entry name" value="ACT-like_dom_sf"/>
</dbReference>
<dbReference type="InterPro" id="IPR002912">
    <property type="entry name" value="ACT_dom"/>
</dbReference>
<dbReference type="InterPro" id="IPR008310">
    <property type="entry name" value="UPF0735_ACT_dom-cont"/>
</dbReference>
<dbReference type="NCBIfam" id="NF003361">
    <property type="entry name" value="PRK04435.1"/>
    <property type="match status" value="1"/>
</dbReference>
<dbReference type="Pfam" id="PF01842">
    <property type="entry name" value="ACT"/>
    <property type="match status" value="1"/>
</dbReference>
<dbReference type="PIRSF" id="PIRSF025624">
    <property type="entry name" value="ACT_PheB"/>
    <property type="match status" value="1"/>
</dbReference>
<dbReference type="SUPFAM" id="SSF55021">
    <property type="entry name" value="ACT-like"/>
    <property type="match status" value="1"/>
</dbReference>
<dbReference type="PROSITE" id="PS51671">
    <property type="entry name" value="ACT"/>
    <property type="match status" value="1"/>
</dbReference>
<organism>
    <name type="scientific">Heliobacterium modesticaldum (strain ATCC 51547 / Ice1)</name>
    <dbReference type="NCBI Taxonomy" id="498761"/>
    <lineage>
        <taxon>Bacteria</taxon>
        <taxon>Bacillati</taxon>
        <taxon>Bacillota</taxon>
        <taxon>Clostridia</taxon>
        <taxon>Eubacteriales</taxon>
        <taxon>Heliobacteriaceae</taxon>
        <taxon>Heliomicrobium</taxon>
    </lineage>
</organism>
<keyword id="KW-1185">Reference proteome</keyword>
<proteinExistence type="inferred from homology"/>
<accession>B0TFR3</accession>